<accession>P86483</accession>
<comment type="function">
    <text evidence="2">Stimulates smooth muscle contraction in isolated rat stomach strip.</text>
</comment>
<comment type="subcellular location">
    <subcellularLocation>
        <location evidence="2">Secreted</location>
    </subcellularLocation>
</comment>
<comment type="tissue specificity">
    <text evidence="2">Expressed by the skin dorsal glands.</text>
</comment>
<comment type="similarity">
    <text evidence="1">Belongs to the bombesin/neuromedin-B/ranatensin family.</text>
</comment>
<feature type="signal peptide" evidence="1">
    <location>
        <begin position="1"/>
        <end position="30"/>
    </location>
</feature>
<feature type="propeptide" id="PRO_0000394189" evidence="1 2">
    <location>
        <begin position="31"/>
        <end position="49"/>
    </location>
</feature>
<feature type="peptide" id="PRO_0000394190" description="Bombesin" evidence="2">
    <location>
        <begin position="50"/>
        <end position="64"/>
    </location>
</feature>
<feature type="modified residue" description="Pyrrolidone carboxylic acid" evidence="2">
    <location>
        <position position="50"/>
    </location>
</feature>
<feature type="modified residue" description="Methionine amide" evidence="2">
    <location>
        <position position="64"/>
    </location>
</feature>
<keyword id="KW-0027">Amidation</keyword>
<keyword id="KW-0878">Amphibian defense peptide</keyword>
<keyword id="KW-0165">Cleavage on pair of basic residues</keyword>
<keyword id="KW-0903">Direct protein sequencing</keyword>
<keyword id="KW-0873">Pyrrolidone carboxylic acid</keyword>
<keyword id="KW-0964">Secreted</keyword>
<keyword id="KW-0732">Signal</keyword>
<sequence length="67" mass="7491">MSLLPAVKVLPLGYLGIVLVFSLILRSAMVDFIQDAGKLERIDTYKREAQMIFGAPMWALGHLMGRK</sequence>
<organism>
    <name type="scientific">Sanguirana varians</name>
    <name type="common">Palawan frog</name>
    <name type="synonym">Rana varians</name>
    <dbReference type="NCBI Taxonomy" id="367680"/>
    <lineage>
        <taxon>Eukaryota</taxon>
        <taxon>Metazoa</taxon>
        <taxon>Chordata</taxon>
        <taxon>Craniata</taxon>
        <taxon>Vertebrata</taxon>
        <taxon>Euteleostomi</taxon>
        <taxon>Amphibia</taxon>
        <taxon>Batrachia</taxon>
        <taxon>Anura</taxon>
        <taxon>Neobatrachia</taxon>
        <taxon>Ranoidea</taxon>
        <taxon>Ranidae</taxon>
        <taxon>Sanguirana</taxon>
    </lineage>
</organism>
<proteinExistence type="evidence at protein level"/>
<protein>
    <recommendedName>
        <fullName evidence="3">Bombesin</fullName>
    </recommendedName>
</protein>
<evidence type="ECO:0000255" key="1"/>
<evidence type="ECO:0000269" key="2">
    <source>
    </source>
</evidence>
<evidence type="ECO:0000303" key="3">
    <source>
    </source>
</evidence>
<evidence type="ECO:0000305" key="4"/>
<reference evidence="4" key="1">
    <citation type="journal article" date="2010" name="Comp. Biochem. Physiol.">
        <title>A bombesin-like peptide from skin of Sanguirana varians.</title>
        <authorList>
            <person name="Miao Y."/>
            <person name="Li W."/>
            <person name="Duan L."/>
            <person name="Xiao Y."/>
        </authorList>
    </citation>
    <scope>NUCLEOTIDE SEQUENCE [MRNA]</scope>
    <scope>PROTEIN SEQUENCE OF 50-64</scope>
    <scope>FUNCTION</scope>
    <scope>SUBCELLULAR LOCATION</scope>
    <scope>TISSUE SPECIFICITY</scope>
    <scope>PYROGLUTAMATE FORMATION AT GLN-50</scope>
    <scope>AMIDATION AT MET-64</scope>
    <source>
        <tissue evidence="2">Skin</tissue>
        <tissue evidence="2">Skin secretion</tissue>
    </source>
</reference>
<dbReference type="GO" id="GO:0005576">
    <property type="term" value="C:extracellular region"/>
    <property type="evidence" value="ECO:0000314"/>
    <property type="project" value="UniProtKB"/>
</dbReference>
<dbReference type="GO" id="GO:0006952">
    <property type="term" value="P:defense response"/>
    <property type="evidence" value="ECO:0007669"/>
    <property type="project" value="UniProtKB-KW"/>
</dbReference>
<dbReference type="GO" id="GO:0007218">
    <property type="term" value="P:neuropeptide signaling pathway"/>
    <property type="evidence" value="ECO:0007669"/>
    <property type="project" value="InterPro"/>
</dbReference>
<dbReference type="GO" id="GO:0045933">
    <property type="term" value="P:positive regulation of muscle contraction"/>
    <property type="evidence" value="ECO:0000314"/>
    <property type="project" value="UniProtKB"/>
</dbReference>
<dbReference type="InterPro" id="IPR000874">
    <property type="entry name" value="Bombesin"/>
</dbReference>
<dbReference type="Pfam" id="PF02044">
    <property type="entry name" value="Bombesin"/>
    <property type="match status" value="1"/>
</dbReference>
<dbReference type="PROSITE" id="PS00257">
    <property type="entry name" value="BOMBESIN"/>
    <property type="match status" value="1"/>
</dbReference>
<name>BOMB_SANVA</name>